<name>Y178_AQUAE</name>
<organism>
    <name type="scientific">Aquifex aeolicus (strain VF5)</name>
    <dbReference type="NCBI Taxonomy" id="224324"/>
    <lineage>
        <taxon>Bacteria</taxon>
        <taxon>Pseudomonadati</taxon>
        <taxon>Aquificota</taxon>
        <taxon>Aquificia</taxon>
        <taxon>Aquificales</taxon>
        <taxon>Aquificaceae</taxon>
        <taxon>Aquifex</taxon>
    </lineage>
</organism>
<comment type="similarity">
    <text evidence="1">Belongs to the universal stress protein A family.</text>
</comment>
<feature type="chain" id="PRO_0000186844" description="Universal stress protein Aq_178">
    <location>
        <begin position="1"/>
        <end position="135"/>
    </location>
</feature>
<feature type="strand" evidence="2">
    <location>
        <begin position="2"/>
        <end position="9"/>
    </location>
</feature>
<feature type="helix" evidence="2">
    <location>
        <begin position="15"/>
        <end position="25"/>
    </location>
</feature>
<feature type="turn" evidence="2">
    <location>
        <begin position="26"/>
        <end position="28"/>
    </location>
</feature>
<feature type="strand" evidence="2">
    <location>
        <begin position="31"/>
        <end position="37"/>
    </location>
</feature>
<feature type="helix" evidence="2">
    <location>
        <begin position="39"/>
        <end position="51"/>
    </location>
</feature>
<feature type="helix" evidence="2">
    <location>
        <begin position="58"/>
        <end position="79"/>
    </location>
</feature>
<feature type="strand" evidence="2">
    <location>
        <begin position="87"/>
        <end position="90"/>
    </location>
</feature>
<feature type="helix" evidence="2">
    <location>
        <begin position="94"/>
        <end position="102"/>
    </location>
</feature>
<feature type="strand" evidence="2">
    <location>
        <begin position="108"/>
        <end position="112"/>
    </location>
</feature>
<feature type="helix" evidence="2">
    <location>
        <begin position="117"/>
        <end position="119"/>
    </location>
</feature>
<feature type="helix" evidence="2">
    <location>
        <begin position="121"/>
        <end position="126"/>
    </location>
</feature>
<feature type="strand" evidence="2">
    <location>
        <begin position="127"/>
        <end position="133"/>
    </location>
</feature>
<protein>
    <recommendedName>
        <fullName>Universal stress protein Aq_178</fullName>
        <shortName>USP Aq_178</shortName>
    </recommendedName>
</protein>
<accession>O66565</accession>
<dbReference type="EMBL" id="AE000657">
    <property type="protein sequence ID" value="AAC06529.1"/>
    <property type="molecule type" value="Genomic_DNA"/>
</dbReference>
<dbReference type="PIR" id="A70317">
    <property type="entry name" value="A70317"/>
</dbReference>
<dbReference type="RefSeq" id="NP_213125.1">
    <property type="nucleotide sequence ID" value="NC_000918.1"/>
</dbReference>
<dbReference type="RefSeq" id="WP_010880063.1">
    <property type="nucleotide sequence ID" value="NC_000918.1"/>
</dbReference>
<dbReference type="PDB" id="1Q77">
    <property type="method" value="X-ray"/>
    <property type="resolution" value="2.70 A"/>
    <property type="chains" value="A/B=1-135"/>
</dbReference>
<dbReference type="PDBsum" id="1Q77"/>
<dbReference type="SMR" id="O66565"/>
<dbReference type="STRING" id="224324.aq_178"/>
<dbReference type="EnsemblBacteria" id="AAC06529">
    <property type="protein sequence ID" value="AAC06529"/>
    <property type="gene ID" value="aq_178"/>
</dbReference>
<dbReference type="KEGG" id="aae:aq_178"/>
<dbReference type="HOGENOM" id="CLU_1881441_0_0_0"/>
<dbReference type="InParanoid" id="O66565"/>
<dbReference type="OrthoDB" id="14783at2"/>
<dbReference type="EvolutionaryTrace" id="O66565"/>
<dbReference type="Proteomes" id="UP000000798">
    <property type="component" value="Chromosome"/>
</dbReference>
<dbReference type="Gene3D" id="3.40.50.620">
    <property type="entry name" value="HUPs"/>
    <property type="match status" value="1"/>
</dbReference>
<dbReference type="InterPro" id="IPR014729">
    <property type="entry name" value="Rossmann-like_a/b/a_fold"/>
</dbReference>
<dbReference type="InterPro" id="IPR006016">
    <property type="entry name" value="UspA"/>
</dbReference>
<dbReference type="Pfam" id="PF00582">
    <property type="entry name" value="Usp"/>
    <property type="match status" value="1"/>
</dbReference>
<dbReference type="SUPFAM" id="SSF52402">
    <property type="entry name" value="Adenine nucleotide alpha hydrolases-like"/>
    <property type="match status" value="1"/>
</dbReference>
<keyword id="KW-0002">3D-structure</keyword>
<keyword id="KW-1185">Reference proteome</keyword>
<sequence length="135" mass="15275">MKVLLVLTDAYSDCEKAITYAVNFSEKLGAELDILAVLEDVYNLERANVTFGLPFPPEIKEESKKRIERRLREVWEKLTGSTEIPGVEYRIGPLSEEVKKFVEGKGYELVVWACYPSAYLCKVIDGLNLASLIVK</sequence>
<evidence type="ECO:0000305" key="1"/>
<evidence type="ECO:0007829" key="2">
    <source>
        <dbReference type="PDB" id="1Q77"/>
    </source>
</evidence>
<gene>
    <name type="ordered locus">aq_178</name>
</gene>
<reference key="1">
    <citation type="journal article" date="1998" name="Nature">
        <title>The complete genome of the hyperthermophilic bacterium Aquifex aeolicus.</title>
        <authorList>
            <person name="Deckert G."/>
            <person name="Warren P.V."/>
            <person name="Gaasterland T."/>
            <person name="Young W.G."/>
            <person name="Lenox A.L."/>
            <person name="Graham D.E."/>
            <person name="Overbeek R."/>
            <person name="Snead M.A."/>
            <person name="Keller M."/>
            <person name="Aujay M."/>
            <person name="Huber R."/>
            <person name="Feldman R.A."/>
            <person name="Short J.M."/>
            <person name="Olsen G.J."/>
            <person name="Swanson R.V."/>
        </authorList>
    </citation>
    <scope>NUCLEOTIDE SEQUENCE [LARGE SCALE GENOMIC DNA]</scope>
    <source>
        <strain>VF5</strain>
    </source>
</reference>
<proteinExistence type="evidence at protein level"/>